<keyword id="KW-0479">Metal-binding</keyword>
<keyword id="KW-0665">Pyrimidine biosynthesis</keyword>
<keyword id="KW-1185">Reference proteome</keyword>
<keyword id="KW-0862">Zinc</keyword>
<organism>
    <name type="scientific">Aeropyrum pernix (strain ATCC 700893 / DSM 11879 / JCM 9820 / NBRC 100138 / K1)</name>
    <dbReference type="NCBI Taxonomy" id="272557"/>
    <lineage>
        <taxon>Archaea</taxon>
        <taxon>Thermoproteota</taxon>
        <taxon>Thermoprotei</taxon>
        <taxon>Desulfurococcales</taxon>
        <taxon>Desulfurococcaceae</taxon>
        <taxon>Aeropyrum</taxon>
    </lineage>
</organism>
<evidence type="ECO:0000255" key="1">
    <source>
        <dbReference type="HAMAP-Rule" id="MF_00002"/>
    </source>
</evidence>
<proteinExistence type="inferred from homology"/>
<feature type="chain" id="PRO_0000142326" description="Aspartate carbamoyltransferase regulatory chain">
    <location>
        <begin position="1"/>
        <end position="159"/>
    </location>
</feature>
<feature type="binding site" evidence="1">
    <location>
        <position position="111"/>
    </location>
    <ligand>
        <name>Zn(2+)</name>
        <dbReference type="ChEBI" id="CHEBI:29105"/>
    </ligand>
</feature>
<feature type="binding site" evidence="1">
    <location>
        <position position="116"/>
    </location>
    <ligand>
        <name>Zn(2+)</name>
        <dbReference type="ChEBI" id="CHEBI:29105"/>
    </ligand>
</feature>
<feature type="binding site" evidence="1">
    <location>
        <position position="141"/>
    </location>
    <ligand>
        <name>Zn(2+)</name>
        <dbReference type="ChEBI" id="CHEBI:29105"/>
    </ligand>
</feature>
<feature type="binding site" evidence="1">
    <location>
        <position position="144"/>
    </location>
    <ligand>
        <name>Zn(2+)</name>
        <dbReference type="ChEBI" id="CHEBI:29105"/>
    </ligand>
</feature>
<sequence length="159" mass="17751">MEGEGLLVRKIRSGVVIDHIPPGRAFTMLKALGLLPPRGYRWRIAVVINAESSKLGRKDILKIEGYKPRQRDLEVLGIIAPGATFNVIEDYKVVEKVKLKLPEESQGVLRCPNPTCITRKEREKAVSKMVLVSQDPPAYRCVYCGTTVMGDEIHDLISP</sequence>
<gene>
    <name evidence="1" type="primary">pyrI</name>
    <name type="ordered locus">APE_1662.1</name>
</gene>
<protein>
    <recommendedName>
        <fullName evidence="1">Aspartate carbamoyltransferase regulatory chain</fullName>
    </recommendedName>
</protein>
<reference key="1">
    <citation type="journal article" date="1999" name="DNA Res.">
        <title>Complete genome sequence of an aerobic hyper-thermophilic crenarchaeon, Aeropyrum pernix K1.</title>
        <authorList>
            <person name="Kawarabayasi Y."/>
            <person name="Hino Y."/>
            <person name="Horikawa H."/>
            <person name="Yamazaki S."/>
            <person name="Haikawa Y."/>
            <person name="Jin-no K."/>
            <person name="Takahashi M."/>
            <person name="Sekine M."/>
            <person name="Baba S."/>
            <person name="Ankai A."/>
            <person name="Kosugi H."/>
            <person name="Hosoyama A."/>
            <person name="Fukui S."/>
            <person name="Nagai Y."/>
            <person name="Nishijima K."/>
            <person name="Nakazawa H."/>
            <person name="Takamiya M."/>
            <person name="Masuda S."/>
            <person name="Funahashi T."/>
            <person name="Tanaka T."/>
            <person name="Kudoh Y."/>
            <person name="Yamazaki J."/>
            <person name="Kushida N."/>
            <person name="Oguchi A."/>
            <person name="Aoki K."/>
            <person name="Kubota K."/>
            <person name="Nakamura Y."/>
            <person name="Nomura N."/>
            <person name="Sako Y."/>
            <person name="Kikuchi H."/>
        </authorList>
    </citation>
    <scope>NUCLEOTIDE SEQUENCE [LARGE SCALE GENOMIC DNA]</scope>
    <source>
        <strain>ATCC 700893 / DSM 11879 / JCM 9820 / NBRC 100138 / K1</strain>
    </source>
</reference>
<name>PYRI_AERPE</name>
<accession>Q9YBD5</accession>
<dbReference type="EMBL" id="BA000002">
    <property type="protein sequence ID" value="BAA80663.2"/>
    <property type="molecule type" value="Genomic_DNA"/>
</dbReference>
<dbReference type="PIR" id="B72547">
    <property type="entry name" value="B72547"/>
</dbReference>
<dbReference type="RefSeq" id="WP_010866516.1">
    <property type="nucleotide sequence ID" value="NC_000854.2"/>
</dbReference>
<dbReference type="SMR" id="Q9YBD5"/>
<dbReference type="STRING" id="272557.APE_1662.1"/>
<dbReference type="EnsemblBacteria" id="BAA80663">
    <property type="protein sequence ID" value="BAA80663"/>
    <property type="gene ID" value="APE_1662.1"/>
</dbReference>
<dbReference type="GeneID" id="1446158"/>
<dbReference type="KEGG" id="ape:APE_1662.1"/>
<dbReference type="PATRIC" id="fig|272557.25.peg.1120"/>
<dbReference type="eggNOG" id="arCOG04229">
    <property type="taxonomic scope" value="Archaea"/>
</dbReference>
<dbReference type="Proteomes" id="UP000002518">
    <property type="component" value="Chromosome"/>
</dbReference>
<dbReference type="GO" id="GO:0009347">
    <property type="term" value="C:aspartate carbamoyltransferase complex"/>
    <property type="evidence" value="ECO:0007669"/>
    <property type="project" value="InterPro"/>
</dbReference>
<dbReference type="GO" id="GO:0046872">
    <property type="term" value="F:metal ion binding"/>
    <property type="evidence" value="ECO:0007669"/>
    <property type="project" value="UniProtKB-KW"/>
</dbReference>
<dbReference type="GO" id="GO:0006207">
    <property type="term" value="P:'de novo' pyrimidine nucleobase biosynthetic process"/>
    <property type="evidence" value="ECO:0007669"/>
    <property type="project" value="InterPro"/>
</dbReference>
<dbReference type="GO" id="GO:0006221">
    <property type="term" value="P:pyrimidine nucleotide biosynthetic process"/>
    <property type="evidence" value="ECO:0007669"/>
    <property type="project" value="UniProtKB-UniRule"/>
</dbReference>
<dbReference type="Gene3D" id="2.30.30.20">
    <property type="entry name" value="Aspartate carbamoyltransferase regulatory subunit, C-terminal domain"/>
    <property type="match status" value="1"/>
</dbReference>
<dbReference type="Gene3D" id="3.30.70.140">
    <property type="entry name" value="Aspartate carbamoyltransferase regulatory subunit, N-terminal domain"/>
    <property type="match status" value="1"/>
</dbReference>
<dbReference type="HAMAP" id="MF_00002">
    <property type="entry name" value="Asp_carb_tr_reg"/>
    <property type="match status" value="1"/>
</dbReference>
<dbReference type="InterPro" id="IPR020545">
    <property type="entry name" value="Asp_carbamoyltransf_reg_N"/>
</dbReference>
<dbReference type="InterPro" id="IPR002801">
    <property type="entry name" value="Asp_carbamoylTrfase_reg"/>
</dbReference>
<dbReference type="InterPro" id="IPR020542">
    <property type="entry name" value="Asp_carbamoyltrfase_reg_C"/>
</dbReference>
<dbReference type="InterPro" id="IPR036792">
    <property type="entry name" value="Asp_carbatrfase_reg_C_sf"/>
</dbReference>
<dbReference type="InterPro" id="IPR036793">
    <property type="entry name" value="Asp_carbatrfase_reg_N_sf"/>
</dbReference>
<dbReference type="PANTHER" id="PTHR35805">
    <property type="entry name" value="ASPARTATE CARBAMOYLTRANSFERASE REGULATORY CHAIN"/>
    <property type="match status" value="1"/>
</dbReference>
<dbReference type="PANTHER" id="PTHR35805:SF1">
    <property type="entry name" value="ASPARTATE CARBAMOYLTRANSFERASE REGULATORY CHAIN"/>
    <property type="match status" value="1"/>
</dbReference>
<dbReference type="Pfam" id="PF01948">
    <property type="entry name" value="PyrI"/>
    <property type="match status" value="1"/>
</dbReference>
<dbReference type="Pfam" id="PF02748">
    <property type="entry name" value="PyrI_C"/>
    <property type="match status" value="1"/>
</dbReference>
<dbReference type="SUPFAM" id="SSF57825">
    <property type="entry name" value="Aspartate carbamoyltransferase, Regulatory-chain, C-terminal domain"/>
    <property type="match status" value="1"/>
</dbReference>
<dbReference type="SUPFAM" id="SSF54893">
    <property type="entry name" value="Aspartate carbamoyltransferase, Regulatory-chain, N-terminal domain"/>
    <property type="match status" value="1"/>
</dbReference>
<comment type="function">
    <text evidence="1">Involved in allosteric regulation of aspartate carbamoyltransferase.</text>
</comment>
<comment type="cofactor">
    <cofactor evidence="1">
        <name>Zn(2+)</name>
        <dbReference type="ChEBI" id="CHEBI:29105"/>
    </cofactor>
    <text evidence="1">Binds 1 zinc ion per subunit.</text>
</comment>
<comment type="subunit">
    <text evidence="1">Contains catalytic and regulatory chains.</text>
</comment>
<comment type="similarity">
    <text evidence="1">Belongs to the PyrI family.</text>
</comment>